<name>NADE_MYCLE</name>
<protein>
    <recommendedName>
        <fullName evidence="1">Glutamine-dependent NAD(+) synthetase</fullName>
        <ecNumber evidence="1">6.3.5.1</ecNumber>
    </recommendedName>
    <alternativeName>
        <fullName evidence="1">NAD(+) synthase [glutamine-hydrolyzing]</fullName>
    </alternativeName>
</protein>
<feature type="chain" id="PRO_0000152240" description="Glutamine-dependent NAD(+) synthetase">
    <location>
        <begin position="1"/>
        <end position="680"/>
    </location>
</feature>
<feature type="domain" description="CN hydrolase" evidence="2">
    <location>
        <begin position="12"/>
        <end position="276"/>
    </location>
</feature>
<feature type="active site" description="Proton acceptor; for glutaminase activity" evidence="1">
    <location>
        <position position="52"/>
    </location>
</feature>
<feature type="active site" description="For glutaminase activity" evidence="1">
    <location>
        <position position="121"/>
    </location>
</feature>
<feature type="active site" description="Nucleophile; for glutaminase activity" evidence="1">
    <location>
        <position position="176"/>
    </location>
</feature>
<feature type="binding site" evidence="1">
    <location>
        <position position="127"/>
    </location>
    <ligand>
        <name>L-glutamine</name>
        <dbReference type="ChEBI" id="CHEBI:58359"/>
    </ligand>
</feature>
<feature type="binding site" evidence="1">
    <location>
        <position position="203"/>
    </location>
    <ligand>
        <name>L-glutamine</name>
        <dbReference type="ChEBI" id="CHEBI:58359"/>
    </ligand>
</feature>
<feature type="binding site" evidence="1">
    <location>
        <position position="209"/>
    </location>
    <ligand>
        <name>L-glutamine</name>
        <dbReference type="ChEBI" id="CHEBI:58359"/>
    </ligand>
</feature>
<feature type="binding site" evidence="1">
    <location>
        <begin position="366"/>
        <end position="373"/>
    </location>
    <ligand>
        <name>ATP</name>
        <dbReference type="ChEBI" id="CHEBI:30616"/>
    </ligand>
</feature>
<feature type="binding site" evidence="1">
    <location>
        <position position="456"/>
    </location>
    <ligand>
        <name>deamido-NAD(+)</name>
        <dbReference type="ChEBI" id="CHEBI:58437"/>
    </ligand>
</feature>
<feature type="binding site" evidence="1">
    <location>
        <position position="480"/>
    </location>
    <ligand>
        <name>ATP</name>
        <dbReference type="ChEBI" id="CHEBI:30616"/>
    </ligand>
</feature>
<feature type="binding site" evidence="1">
    <location>
        <position position="485"/>
    </location>
    <ligand>
        <name>deamido-NAD(+)</name>
        <dbReference type="ChEBI" id="CHEBI:58437"/>
    </ligand>
</feature>
<feature type="binding site" evidence="1">
    <location>
        <begin position="490"/>
        <end position="493"/>
    </location>
    <ligand>
        <name>deamido-NAD(+)</name>
        <dbReference type="ChEBI" id="CHEBI:58437"/>
    </ligand>
</feature>
<feature type="binding site" evidence="1">
    <location>
        <position position="636"/>
    </location>
    <ligand>
        <name>deamido-NAD(+)</name>
        <dbReference type="ChEBI" id="CHEBI:58437"/>
    </ligand>
</feature>
<evidence type="ECO:0000255" key="1">
    <source>
        <dbReference type="HAMAP-Rule" id="MF_02090"/>
    </source>
</evidence>
<evidence type="ECO:0000255" key="2">
    <source>
        <dbReference type="PROSITE-ProRule" id="PRU00054"/>
    </source>
</evidence>
<evidence type="ECO:0000305" key="3"/>
<keyword id="KW-0067">ATP-binding</keyword>
<keyword id="KW-0436">Ligase</keyword>
<keyword id="KW-0520">NAD</keyword>
<keyword id="KW-0547">Nucleotide-binding</keyword>
<keyword id="KW-1185">Reference proteome</keyword>
<dbReference type="EC" id="6.3.5.1" evidence="1"/>
<dbReference type="EMBL" id="AL583922">
    <property type="protein sequence ID" value="CAC30413.1"/>
    <property type="molecule type" value="Genomic_DNA"/>
</dbReference>
<dbReference type="PIR" id="H87091">
    <property type="entry name" value="H87091"/>
</dbReference>
<dbReference type="RefSeq" id="NP_302028.1">
    <property type="nucleotide sequence ID" value="NC_002677.1"/>
</dbReference>
<dbReference type="RefSeq" id="WP_010908349.1">
    <property type="nucleotide sequence ID" value="NC_002677.1"/>
</dbReference>
<dbReference type="SMR" id="Q9CBZ6"/>
<dbReference type="STRING" id="272631.gene:17575301"/>
<dbReference type="KEGG" id="mle:ML1463"/>
<dbReference type="PATRIC" id="fig|272631.5.peg.2739"/>
<dbReference type="Leproma" id="ML1463"/>
<dbReference type="eggNOG" id="COG0171">
    <property type="taxonomic scope" value="Bacteria"/>
</dbReference>
<dbReference type="eggNOG" id="COG0388">
    <property type="taxonomic scope" value="Bacteria"/>
</dbReference>
<dbReference type="HOGENOM" id="CLU_025662_0_0_11"/>
<dbReference type="OrthoDB" id="9760188at2"/>
<dbReference type="UniPathway" id="UPA00253">
    <property type="reaction ID" value="UER00334"/>
</dbReference>
<dbReference type="Proteomes" id="UP000000806">
    <property type="component" value="Chromosome"/>
</dbReference>
<dbReference type="GO" id="GO:0005737">
    <property type="term" value="C:cytoplasm"/>
    <property type="evidence" value="ECO:0007669"/>
    <property type="project" value="InterPro"/>
</dbReference>
<dbReference type="GO" id="GO:0005524">
    <property type="term" value="F:ATP binding"/>
    <property type="evidence" value="ECO:0007669"/>
    <property type="project" value="UniProtKB-UniRule"/>
</dbReference>
<dbReference type="GO" id="GO:0004359">
    <property type="term" value="F:glutaminase activity"/>
    <property type="evidence" value="ECO:0007669"/>
    <property type="project" value="InterPro"/>
</dbReference>
<dbReference type="GO" id="GO:0003952">
    <property type="term" value="F:NAD+ synthase (glutamine-hydrolyzing) activity"/>
    <property type="evidence" value="ECO:0007669"/>
    <property type="project" value="UniProtKB-EC"/>
</dbReference>
<dbReference type="GO" id="GO:0008795">
    <property type="term" value="F:NAD+ synthase activity"/>
    <property type="evidence" value="ECO:0007669"/>
    <property type="project" value="UniProtKB-UniRule"/>
</dbReference>
<dbReference type="GO" id="GO:0009435">
    <property type="term" value="P:NAD biosynthetic process"/>
    <property type="evidence" value="ECO:0007669"/>
    <property type="project" value="UniProtKB-UniRule"/>
</dbReference>
<dbReference type="CDD" id="cd07570">
    <property type="entry name" value="GAT_Gln-NAD-synth"/>
    <property type="match status" value="1"/>
</dbReference>
<dbReference type="CDD" id="cd00553">
    <property type="entry name" value="NAD_synthase"/>
    <property type="match status" value="1"/>
</dbReference>
<dbReference type="FunFam" id="1.10.10.1140:FF:000001">
    <property type="entry name" value="Glutamine-dependent NAD(+) synthetase"/>
    <property type="match status" value="1"/>
</dbReference>
<dbReference type="FunFam" id="3.40.50.620:FF:000155">
    <property type="entry name" value="Glutamine-dependent NAD(+) synthetase"/>
    <property type="match status" value="1"/>
</dbReference>
<dbReference type="FunFam" id="3.60.110.10:FF:000020">
    <property type="entry name" value="Glutamine-dependent NAD(+) synthetase"/>
    <property type="match status" value="1"/>
</dbReference>
<dbReference type="Gene3D" id="3.60.110.10">
    <property type="entry name" value="Carbon-nitrogen hydrolase"/>
    <property type="match status" value="1"/>
</dbReference>
<dbReference type="Gene3D" id="1.10.10.1140">
    <property type="entry name" value="Glutamine-dependent NAD+ synthetase, C-terminal domain"/>
    <property type="match status" value="1"/>
</dbReference>
<dbReference type="Gene3D" id="3.40.50.620">
    <property type="entry name" value="HUPs"/>
    <property type="match status" value="1"/>
</dbReference>
<dbReference type="HAMAP" id="MF_02090">
    <property type="entry name" value="NadE_glutamine_dep"/>
    <property type="match status" value="1"/>
</dbReference>
<dbReference type="InterPro" id="IPR003010">
    <property type="entry name" value="C-N_Hydrolase"/>
</dbReference>
<dbReference type="InterPro" id="IPR036526">
    <property type="entry name" value="C-N_Hydrolase_sf"/>
</dbReference>
<dbReference type="InterPro" id="IPR014445">
    <property type="entry name" value="Gln-dep_NAD_synthase"/>
</dbReference>
<dbReference type="InterPro" id="IPR041856">
    <property type="entry name" value="NAD+_synth_C"/>
</dbReference>
<dbReference type="InterPro" id="IPR022310">
    <property type="entry name" value="NAD/GMP_synthase"/>
</dbReference>
<dbReference type="InterPro" id="IPR003694">
    <property type="entry name" value="NAD_synthase"/>
</dbReference>
<dbReference type="InterPro" id="IPR014729">
    <property type="entry name" value="Rossmann-like_a/b/a_fold"/>
</dbReference>
<dbReference type="NCBIfam" id="NF002730">
    <property type="entry name" value="PRK02628.1"/>
    <property type="match status" value="1"/>
</dbReference>
<dbReference type="PANTHER" id="PTHR23090:SF9">
    <property type="entry name" value="GLUTAMINE-DEPENDENT NAD(+) SYNTHETASE"/>
    <property type="match status" value="1"/>
</dbReference>
<dbReference type="PANTHER" id="PTHR23090">
    <property type="entry name" value="NH 3 /GLUTAMINE-DEPENDENT NAD + SYNTHETASE"/>
    <property type="match status" value="1"/>
</dbReference>
<dbReference type="Pfam" id="PF00795">
    <property type="entry name" value="CN_hydrolase"/>
    <property type="match status" value="1"/>
</dbReference>
<dbReference type="Pfam" id="PF02540">
    <property type="entry name" value="NAD_synthase"/>
    <property type="match status" value="1"/>
</dbReference>
<dbReference type="PIRSF" id="PIRSF006630">
    <property type="entry name" value="NADS_GAT"/>
    <property type="match status" value="1"/>
</dbReference>
<dbReference type="SUPFAM" id="SSF52402">
    <property type="entry name" value="Adenine nucleotide alpha hydrolases-like"/>
    <property type="match status" value="1"/>
</dbReference>
<dbReference type="SUPFAM" id="SSF56317">
    <property type="entry name" value="Carbon-nitrogen hydrolase"/>
    <property type="match status" value="1"/>
</dbReference>
<dbReference type="PROSITE" id="PS50263">
    <property type="entry name" value="CN_HYDROLASE"/>
    <property type="match status" value="1"/>
</dbReference>
<reference key="1">
    <citation type="journal article" date="2001" name="Nature">
        <title>Massive gene decay in the leprosy bacillus.</title>
        <authorList>
            <person name="Cole S.T."/>
            <person name="Eiglmeier K."/>
            <person name="Parkhill J."/>
            <person name="James K.D."/>
            <person name="Thomson N.R."/>
            <person name="Wheeler P.R."/>
            <person name="Honore N."/>
            <person name="Garnier T."/>
            <person name="Churcher C.M."/>
            <person name="Harris D.E."/>
            <person name="Mungall K.L."/>
            <person name="Basham D."/>
            <person name="Brown D."/>
            <person name="Chillingworth T."/>
            <person name="Connor R."/>
            <person name="Davies R.M."/>
            <person name="Devlin K."/>
            <person name="Duthoy S."/>
            <person name="Feltwell T."/>
            <person name="Fraser A."/>
            <person name="Hamlin N."/>
            <person name="Holroyd S."/>
            <person name="Hornsby T."/>
            <person name="Jagels K."/>
            <person name="Lacroix C."/>
            <person name="Maclean J."/>
            <person name="Moule S."/>
            <person name="Murphy L.D."/>
            <person name="Oliver K."/>
            <person name="Quail M.A."/>
            <person name="Rajandream M.A."/>
            <person name="Rutherford K.M."/>
            <person name="Rutter S."/>
            <person name="Seeger K."/>
            <person name="Simon S."/>
            <person name="Simmonds M."/>
            <person name="Skelton J."/>
            <person name="Squares R."/>
            <person name="Squares S."/>
            <person name="Stevens K."/>
            <person name="Taylor K."/>
            <person name="Whitehead S."/>
            <person name="Woodward J.R."/>
            <person name="Barrell B.G."/>
        </authorList>
    </citation>
    <scope>NUCLEOTIDE SEQUENCE [LARGE SCALE GENOMIC DNA]</scope>
    <source>
        <strain>TN</strain>
    </source>
</reference>
<proteinExistence type="inferred from homology"/>
<comment type="function">
    <text evidence="1">Catalyzes the ATP-dependent amidation of deamido-NAD to form NAD. Uses L-glutamine as a nitrogen source.</text>
</comment>
<comment type="catalytic activity">
    <reaction evidence="1">
        <text>deamido-NAD(+) + L-glutamine + ATP + H2O = L-glutamate + AMP + diphosphate + NAD(+) + H(+)</text>
        <dbReference type="Rhea" id="RHEA:24384"/>
        <dbReference type="ChEBI" id="CHEBI:15377"/>
        <dbReference type="ChEBI" id="CHEBI:15378"/>
        <dbReference type="ChEBI" id="CHEBI:29985"/>
        <dbReference type="ChEBI" id="CHEBI:30616"/>
        <dbReference type="ChEBI" id="CHEBI:33019"/>
        <dbReference type="ChEBI" id="CHEBI:57540"/>
        <dbReference type="ChEBI" id="CHEBI:58359"/>
        <dbReference type="ChEBI" id="CHEBI:58437"/>
        <dbReference type="ChEBI" id="CHEBI:456215"/>
        <dbReference type="EC" id="6.3.5.1"/>
    </reaction>
</comment>
<comment type="pathway">
    <text evidence="1">Cofactor biosynthesis; NAD(+) biosynthesis; NAD(+) from deamido-NAD(+) (L-Gln route): step 1/1.</text>
</comment>
<comment type="similarity">
    <text evidence="1 3">In the C-terminal section; belongs to the NAD synthetase family.</text>
</comment>
<organism>
    <name type="scientific">Mycobacterium leprae (strain TN)</name>
    <dbReference type="NCBI Taxonomy" id="272631"/>
    <lineage>
        <taxon>Bacteria</taxon>
        <taxon>Bacillati</taxon>
        <taxon>Actinomycetota</taxon>
        <taxon>Actinomycetes</taxon>
        <taxon>Mycobacteriales</taxon>
        <taxon>Mycobacteriaceae</taxon>
        <taxon>Mycobacterium</taxon>
    </lineage>
</organism>
<sequence length="680" mass="75543">MDFYNSYSQGFVRVAACTHHASIGDPTTNAASVLRLARQCHDDGVAVAVFPELTLSGYSIEDILLQDLLLEAVEDTVLDIVVASADLLPVLVIGAPLRYRHRIYNTAVIIHRGVVLGVAPKSYLPTYREFYERRQLAPGDDEHGTIGIGDLRAPFGPDLLFAAADLLGLVLHVEICEDMFVPVPPSAEAALAGATVLANLSGSPITIGRAEDRRLLARSASLRCLAAYVYAAAGEGESTTDLAWDGQTMIWENGVLLAESERFPKGEHRSVADVDTELLRSERLRMGTFNDNRRRHRALVEPFRRIEFRLEPPVGNIGLLREVERFPFVPADPQRLQQDCYEAYNIQVSGLEQRLRALDYPKVVIGVSGGLDSTHALIVAARAMDREGRPRSDILAFTLPGFVTGDRTKSNATELCRALGVTFTEIDIRDTATLMLKKIGHPFSRGEVSYDVTFENVQAGVRTDYLFRLANQHGGIVLGTGDLSELGLGWSTYGVGDQMSHYNINAGVPKTLVQHLIRWVIASSQFEEQVDKVLQSVLDTEITPELIPSDGEEKLQSTEAKVGPFALQDFSLFQVLRYGFRPSKIAFLTWHAWSDPNCGKWPPGFPEDKRLSYSLKEIRHWLQIFVQRFYSFSQFKRSALPNGPKVSHGGALSPRGDWRAPSDMSARIWLDEIEREVPEE</sequence>
<accession>Q9CBZ6</accession>
<gene>
    <name evidence="1" type="primary">nadE</name>
    <name type="ordered locus">ML1463</name>
</gene>